<proteinExistence type="inferred from homology"/>
<keyword id="KW-0030">Aminoacyl-tRNA synthetase</keyword>
<keyword id="KW-0067">ATP-binding</keyword>
<keyword id="KW-0963">Cytoplasm</keyword>
<keyword id="KW-0436">Ligase</keyword>
<keyword id="KW-0547">Nucleotide-binding</keyword>
<keyword id="KW-0648">Protein biosynthesis</keyword>
<keyword id="KW-1185">Reference proteome</keyword>
<dbReference type="EC" id="6.1.1.14"/>
<dbReference type="EMBL" id="L42023">
    <property type="protein sequence ID" value="AAC22586.1"/>
    <property type="molecule type" value="Genomic_DNA"/>
</dbReference>
<dbReference type="PIR" id="C64103">
    <property type="entry name" value="C64103"/>
</dbReference>
<dbReference type="RefSeq" id="NP_439087.1">
    <property type="nucleotide sequence ID" value="NC_000907.1"/>
</dbReference>
<dbReference type="SMR" id="P43821"/>
<dbReference type="STRING" id="71421.HI_0927"/>
<dbReference type="EnsemblBacteria" id="AAC22586">
    <property type="protein sequence ID" value="AAC22586"/>
    <property type="gene ID" value="HI_0927"/>
</dbReference>
<dbReference type="KEGG" id="hin:HI_0927"/>
<dbReference type="PATRIC" id="fig|71421.8.peg.968"/>
<dbReference type="eggNOG" id="COG0752">
    <property type="taxonomic scope" value="Bacteria"/>
</dbReference>
<dbReference type="HOGENOM" id="CLU_057066_1_0_6"/>
<dbReference type="OrthoDB" id="9802183at2"/>
<dbReference type="PhylomeDB" id="P43821"/>
<dbReference type="BioCyc" id="HINF71421:G1GJ1-967-MONOMER"/>
<dbReference type="Proteomes" id="UP000000579">
    <property type="component" value="Chromosome"/>
</dbReference>
<dbReference type="GO" id="GO:0005737">
    <property type="term" value="C:cytoplasm"/>
    <property type="evidence" value="ECO:0007669"/>
    <property type="project" value="UniProtKB-SubCell"/>
</dbReference>
<dbReference type="GO" id="GO:0005524">
    <property type="term" value="F:ATP binding"/>
    <property type="evidence" value="ECO:0007669"/>
    <property type="project" value="UniProtKB-UniRule"/>
</dbReference>
<dbReference type="GO" id="GO:0004820">
    <property type="term" value="F:glycine-tRNA ligase activity"/>
    <property type="evidence" value="ECO:0007669"/>
    <property type="project" value="UniProtKB-UniRule"/>
</dbReference>
<dbReference type="GO" id="GO:0006426">
    <property type="term" value="P:glycyl-tRNA aminoacylation"/>
    <property type="evidence" value="ECO:0007669"/>
    <property type="project" value="UniProtKB-UniRule"/>
</dbReference>
<dbReference type="CDD" id="cd00733">
    <property type="entry name" value="GlyRS_alpha_core"/>
    <property type="match status" value="1"/>
</dbReference>
<dbReference type="FunFam" id="1.20.58.180:FF:000001">
    <property type="entry name" value="Glycine--tRNA ligase alpha subunit"/>
    <property type="match status" value="1"/>
</dbReference>
<dbReference type="FunFam" id="3.30.930.10:FF:000006">
    <property type="entry name" value="Glycine--tRNA ligase alpha subunit"/>
    <property type="match status" value="1"/>
</dbReference>
<dbReference type="Gene3D" id="3.30.930.10">
    <property type="entry name" value="Bira Bifunctional Protein, Domain 2"/>
    <property type="match status" value="1"/>
</dbReference>
<dbReference type="Gene3D" id="1.20.58.180">
    <property type="entry name" value="Class II aaRS and biotin synthetases, domain 2"/>
    <property type="match status" value="1"/>
</dbReference>
<dbReference type="HAMAP" id="MF_00254">
    <property type="entry name" value="Gly_tRNA_synth_alpha"/>
    <property type="match status" value="1"/>
</dbReference>
<dbReference type="InterPro" id="IPR045864">
    <property type="entry name" value="aa-tRNA-synth_II/BPL/LPL"/>
</dbReference>
<dbReference type="InterPro" id="IPR006194">
    <property type="entry name" value="Gly-tRNA-synth_heterodimer"/>
</dbReference>
<dbReference type="InterPro" id="IPR002310">
    <property type="entry name" value="Gly-tRNA_ligase_asu"/>
</dbReference>
<dbReference type="NCBIfam" id="TIGR00388">
    <property type="entry name" value="glyQ"/>
    <property type="match status" value="1"/>
</dbReference>
<dbReference type="NCBIfam" id="NF006827">
    <property type="entry name" value="PRK09348.1"/>
    <property type="match status" value="1"/>
</dbReference>
<dbReference type="PANTHER" id="PTHR30075:SF2">
    <property type="entry name" value="GLYCINE--TRNA LIGASE, CHLOROPLASTIC_MITOCHONDRIAL 2"/>
    <property type="match status" value="1"/>
</dbReference>
<dbReference type="PANTHER" id="PTHR30075">
    <property type="entry name" value="GLYCYL-TRNA SYNTHETASE"/>
    <property type="match status" value="1"/>
</dbReference>
<dbReference type="Pfam" id="PF02091">
    <property type="entry name" value="tRNA-synt_2e"/>
    <property type="match status" value="1"/>
</dbReference>
<dbReference type="PRINTS" id="PR01044">
    <property type="entry name" value="TRNASYNTHGA"/>
</dbReference>
<dbReference type="SUPFAM" id="SSF55681">
    <property type="entry name" value="Class II aaRS and biotin synthetases"/>
    <property type="match status" value="1"/>
</dbReference>
<dbReference type="PROSITE" id="PS50861">
    <property type="entry name" value="AA_TRNA_LIGASE_II_GLYAB"/>
    <property type="match status" value="1"/>
</dbReference>
<accession>P43821</accession>
<gene>
    <name type="primary">glyQ</name>
    <name type="ordered locus">HI_0927</name>
</gene>
<feature type="chain" id="PRO_0000072841" description="Glycine--tRNA ligase alpha subunit">
    <location>
        <begin position="1"/>
        <end position="302"/>
    </location>
</feature>
<organism>
    <name type="scientific">Haemophilus influenzae (strain ATCC 51907 / DSM 11121 / KW20 / Rd)</name>
    <dbReference type="NCBI Taxonomy" id="71421"/>
    <lineage>
        <taxon>Bacteria</taxon>
        <taxon>Pseudomonadati</taxon>
        <taxon>Pseudomonadota</taxon>
        <taxon>Gammaproteobacteria</taxon>
        <taxon>Pasteurellales</taxon>
        <taxon>Pasteurellaceae</taxon>
        <taxon>Haemophilus</taxon>
    </lineage>
</organism>
<reference key="1">
    <citation type="journal article" date="1995" name="Science">
        <title>Whole-genome random sequencing and assembly of Haemophilus influenzae Rd.</title>
        <authorList>
            <person name="Fleischmann R.D."/>
            <person name="Adams M.D."/>
            <person name="White O."/>
            <person name="Clayton R.A."/>
            <person name="Kirkness E.F."/>
            <person name="Kerlavage A.R."/>
            <person name="Bult C.J."/>
            <person name="Tomb J.-F."/>
            <person name="Dougherty B.A."/>
            <person name="Merrick J.M."/>
            <person name="McKenney K."/>
            <person name="Sutton G.G."/>
            <person name="FitzHugh W."/>
            <person name="Fields C.A."/>
            <person name="Gocayne J.D."/>
            <person name="Scott J.D."/>
            <person name="Shirley R."/>
            <person name="Liu L.-I."/>
            <person name="Glodek A."/>
            <person name="Kelley J.M."/>
            <person name="Weidman J.F."/>
            <person name="Phillips C.A."/>
            <person name="Spriggs T."/>
            <person name="Hedblom E."/>
            <person name="Cotton M.D."/>
            <person name="Utterback T.R."/>
            <person name="Hanna M.C."/>
            <person name="Nguyen D.T."/>
            <person name="Saudek D.M."/>
            <person name="Brandon R.C."/>
            <person name="Fine L.D."/>
            <person name="Fritchman J.L."/>
            <person name="Fuhrmann J.L."/>
            <person name="Geoghagen N.S.M."/>
            <person name="Gnehm C.L."/>
            <person name="McDonald L.A."/>
            <person name="Small K.V."/>
            <person name="Fraser C.M."/>
            <person name="Smith H.O."/>
            <person name="Venter J.C."/>
        </authorList>
    </citation>
    <scope>NUCLEOTIDE SEQUENCE [LARGE SCALE GENOMIC DNA]</scope>
    <source>
        <strain>ATCC 51907 / DSM 11121 / KW20 / Rd</strain>
    </source>
</reference>
<evidence type="ECO:0000250" key="1"/>
<evidence type="ECO:0000305" key="2"/>
<sequence>MSTKFNVKTFQGMILALQEYWANQGCTIVQPFDMEVGAGTSHPMTALRALGPEPMAFAYVQPSRRPTDGRYGENPNRLQHYYQFQVVIKPSPDNIQELYLGSLEMLGFDPTKNDIRFVEDNWENPTLGAWGLGWEVWLNGMEVTQFTYFQQVGGLECKPVTGEVTYGLERLAMYIQGVDSVYDLVWSDGPLGKTTYGDVFHQNEVEQSTYNFEHANTDFLFYCFDQYEKEAQELLALEKPLPLPAYERILKAAHSFNLLDARKAISVTERQRYILRIRALTKGVAEAYYASREALGFPGCKK</sequence>
<name>SYGA_HAEIN</name>
<protein>
    <recommendedName>
        <fullName>Glycine--tRNA ligase alpha subunit</fullName>
        <ecNumber>6.1.1.14</ecNumber>
    </recommendedName>
    <alternativeName>
        <fullName>Glycyl-tRNA synthetase alpha subunit</fullName>
        <shortName>GlyRS</shortName>
    </alternativeName>
</protein>
<comment type="catalytic activity">
    <reaction>
        <text>tRNA(Gly) + glycine + ATP = glycyl-tRNA(Gly) + AMP + diphosphate</text>
        <dbReference type="Rhea" id="RHEA:16013"/>
        <dbReference type="Rhea" id="RHEA-COMP:9664"/>
        <dbReference type="Rhea" id="RHEA-COMP:9683"/>
        <dbReference type="ChEBI" id="CHEBI:30616"/>
        <dbReference type="ChEBI" id="CHEBI:33019"/>
        <dbReference type="ChEBI" id="CHEBI:57305"/>
        <dbReference type="ChEBI" id="CHEBI:78442"/>
        <dbReference type="ChEBI" id="CHEBI:78522"/>
        <dbReference type="ChEBI" id="CHEBI:456215"/>
        <dbReference type="EC" id="6.1.1.14"/>
    </reaction>
</comment>
<comment type="subunit">
    <text evidence="1">Tetramer of two alpha and two beta subunits.</text>
</comment>
<comment type="subcellular location">
    <subcellularLocation>
        <location evidence="1">Cytoplasm</location>
    </subcellularLocation>
</comment>
<comment type="similarity">
    <text evidence="2">Belongs to the class-II aminoacyl-tRNA synthetase family.</text>
</comment>